<keyword id="KW-0963">Cytoplasm</keyword>
<keyword id="KW-0597">Phosphoprotein</keyword>
<keyword id="KW-1185">Reference proteome</keyword>
<keyword id="KW-0677">Repeat</keyword>
<keyword id="KW-0802">TPR repeat</keyword>
<sequence>MALEMDSKNSNSAVTGDAAAATTKTNKAKENNNLAGSKKNQSQNLVNGNGTAADGPATKKKGKKNRNKSPPVSTDEAALSNGHVEEKKPEGDGDADADANANVVAVKDEKAEGGDEADAAELDTEDIDLDALHDAGIHVNISCPGSELLTVQLSSMELVQEIHQLLMDREESCHRTCFSLQLDNVTLDNFAELKTIEQLESGSTIKVVEEPYTMREARIHVRHVRDLLKNLDPADAYNGIECTSLTYLNTITQGDLLDKKKTRPDSVDCTPPDYVTPGVFEPPLLPLHPNFKNAKGPQALKVLTTSAWNPPPGPRKLHGDLMYLYVITMEEKRYHISACSRGFFINQSTDDTFNPKPDNPSYLSHSLIDLLSHISPSFRRAFQAIQKRRTLRHAFERVATPYQVYQWAAPNLEHTVDAIRAEDAFSSKLGYEEHIPGQTRDWNEELQTTRELPRKTLPERLLRERAIFKVHGDFVTAATRGAMAVIDGNVLAINPGEDSKMQMFIWNNIFFSLGFDVRDHYKELGGDYAAYVAPRYDLHGVRVYNAVDVEGLYTLGTVVIDYRGYRVTAQSIIPGILEREQEQSVVYGSIDFGKTVLSHPKYLELLRQAGKHLKILPHSVYNERDEPVELCSSVECKGIIGNDGRHYILDLLRTFPPDVNFLKLQEVKLSTELVEMGFPIEHRHKLCCLRQELLEAFVEDRYVNFIRIAAVHLQQLNAKKPEETQSEEKKQLPAIEEAEKENKENLNVNETPNEKEKDTPVETKNAEAMVNAIREAQSNVATSNEIQAAEVVKQACAAVGSMKEKEFDFRFNPDVFSPGIRHVDGEEGTSGSVAKQKLLVQDAAEFLVVKQIPAFVKEHLSHSSPPIDGQNLTESLHSHGINVRYLGKVIKTLGQMPRMDYLYRIAVMELIVRATKHIYYTYMQSTDPMHLSVAISHFLNCLLTNGPINPVVSNDEMHKKRGGNGGKHNKHKSSKGGKGQQQPAINQNGGSTTSSSSSANAYDWTLVTPRSLWQQIRKESKAYWDWDLDCDSMDSAMNKFGIMRICLLRAFCLKVGIQVLLREYNFDSKHKPTFGDDDIVNVFPVVKHISPRASDAYNFYTTGQAKIQQGLFKEGYELISEALNLLNNVFGAMHQENGSCLRMLARLSYLLGDAQDALAIQQRAVIMSERVNGIDNPSTILEYTHLSLYSFANGHVGMSLKLLYRARYLLVLTCGEDHPEVALIDSNISLILHALGEYELSLRFIEHALKLNLKYFGNKAMHVAVSYHLMARTQSCMGDFRSALNNEKETYSIYKSQLGEKHEKTRDSAECLRLLTQQAVLLQRKMNDIYSNGKLTSDLPPIHITPPSMGSVLEMLNTINGILFVQISQRDIVKVRSEIEKRMKANTDVNEAIKSMVAAANNNGESEVLAPQDNNKEQAATAQQLTNGDKVAVSS</sequence>
<organism>
    <name type="scientific">Drosophila persimilis</name>
    <name type="common">Fruit fly</name>
    <dbReference type="NCBI Taxonomy" id="7234"/>
    <lineage>
        <taxon>Eukaryota</taxon>
        <taxon>Metazoa</taxon>
        <taxon>Ecdysozoa</taxon>
        <taxon>Arthropoda</taxon>
        <taxon>Hexapoda</taxon>
        <taxon>Insecta</taxon>
        <taxon>Pterygota</taxon>
        <taxon>Neoptera</taxon>
        <taxon>Endopterygota</taxon>
        <taxon>Diptera</taxon>
        <taxon>Brachycera</taxon>
        <taxon>Muscomorpha</taxon>
        <taxon>Ephydroidea</taxon>
        <taxon>Drosophilidae</taxon>
        <taxon>Drosophila</taxon>
        <taxon>Sophophora</taxon>
    </lineage>
</organism>
<protein>
    <recommendedName>
        <fullName evidence="2">Protein clueless</fullName>
    </recommendedName>
    <alternativeName>
        <fullName evidence="2">Clustered mitochondria protein homolog</fullName>
    </alternativeName>
</protein>
<dbReference type="EMBL" id="CH479181">
    <property type="protein sequence ID" value="EDW31973.1"/>
    <property type="molecule type" value="Genomic_DNA"/>
</dbReference>
<dbReference type="SMR" id="B4GAM1"/>
<dbReference type="STRING" id="7234.B4GAM1"/>
<dbReference type="EnsemblMetazoa" id="FBtr0177020">
    <property type="protein sequence ID" value="FBpp0175512"/>
    <property type="gene ID" value="FBgn0149014"/>
</dbReference>
<dbReference type="EnsemblMetazoa" id="XM_002016047.2">
    <property type="protein sequence ID" value="XP_002016083.1"/>
    <property type="gene ID" value="LOC6590515"/>
</dbReference>
<dbReference type="GeneID" id="6590515"/>
<dbReference type="KEGG" id="dpe:6590515"/>
<dbReference type="CTD" id="1191"/>
<dbReference type="eggNOG" id="KOG1839">
    <property type="taxonomic scope" value="Eukaryota"/>
</dbReference>
<dbReference type="HOGENOM" id="CLU_003256_1_0_1"/>
<dbReference type="OMA" id="HPVWDKD"/>
<dbReference type="OrthoDB" id="1414216at2759"/>
<dbReference type="PhylomeDB" id="B4GAM1"/>
<dbReference type="Proteomes" id="UP000008744">
    <property type="component" value="Unassembled WGS sequence"/>
</dbReference>
<dbReference type="GO" id="GO:0005737">
    <property type="term" value="C:cytoplasm"/>
    <property type="evidence" value="ECO:0007669"/>
    <property type="project" value="UniProtKB-SubCell"/>
</dbReference>
<dbReference type="GO" id="GO:0003729">
    <property type="term" value="F:mRNA binding"/>
    <property type="evidence" value="ECO:0007669"/>
    <property type="project" value="TreeGrafter"/>
</dbReference>
<dbReference type="GO" id="GO:0048312">
    <property type="term" value="P:intracellular distribution of mitochondria"/>
    <property type="evidence" value="ECO:0007669"/>
    <property type="project" value="TreeGrafter"/>
</dbReference>
<dbReference type="GO" id="GO:0007005">
    <property type="term" value="P:mitochondrion organization"/>
    <property type="evidence" value="ECO:0007669"/>
    <property type="project" value="UniProtKB-UniRule"/>
</dbReference>
<dbReference type="CDD" id="cd15466">
    <property type="entry name" value="CLU-central"/>
    <property type="match status" value="1"/>
</dbReference>
<dbReference type="FunFam" id="1.25.40.10:FF:000099">
    <property type="entry name" value="Clustered mitochondria protein homolog"/>
    <property type="match status" value="1"/>
</dbReference>
<dbReference type="FunFam" id="3.30.2280.10:FF:000002">
    <property type="entry name" value="Clustered mitochondria protein homolog"/>
    <property type="match status" value="1"/>
</dbReference>
<dbReference type="Gene3D" id="3.30.2280.10">
    <property type="entry name" value="Hypothetical protein (hspc210)"/>
    <property type="match status" value="1"/>
</dbReference>
<dbReference type="Gene3D" id="1.25.40.10">
    <property type="entry name" value="Tetratricopeptide repeat domain"/>
    <property type="match status" value="2"/>
</dbReference>
<dbReference type="HAMAP" id="MF_03013">
    <property type="entry name" value="CLU"/>
    <property type="match status" value="1"/>
</dbReference>
<dbReference type="InterPro" id="IPR033646">
    <property type="entry name" value="CLU-central"/>
</dbReference>
<dbReference type="InterPro" id="IPR025697">
    <property type="entry name" value="CLU_dom"/>
</dbReference>
<dbReference type="InterPro" id="IPR028275">
    <property type="entry name" value="CLU_N"/>
</dbReference>
<dbReference type="InterPro" id="IPR027523">
    <property type="entry name" value="CLU_prot"/>
</dbReference>
<dbReference type="InterPro" id="IPR007967">
    <property type="entry name" value="GSKIP_dom"/>
</dbReference>
<dbReference type="InterPro" id="IPR023231">
    <property type="entry name" value="GSKIP_dom_sf"/>
</dbReference>
<dbReference type="InterPro" id="IPR011990">
    <property type="entry name" value="TPR-like_helical_dom_sf"/>
</dbReference>
<dbReference type="PANTHER" id="PTHR12601:SF6">
    <property type="entry name" value="CLUSTERED MITOCHONDRIA PROTEIN HOMOLOG"/>
    <property type="match status" value="1"/>
</dbReference>
<dbReference type="PANTHER" id="PTHR12601">
    <property type="entry name" value="EUKARYOTIC TRANSLATION INITIATION FACTOR 3 SUBUNIT EIF-3"/>
    <property type="match status" value="1"/>
</dbReference>
<dbReference type="Pfam" id="PF13236">
    <property type="entry name" value="CLU"/>
    <property type="match status" value="1"/>
</dbReference>
<dbReference type="Pfam" id="PF15044">
    <property type="entry name" value="CLU_N"/>
    <property type="match status" value="1"/>
</dbReference>
<dbReference type="Pfam" id="PF12807">
    <property type="entry name" value="eIF3_p135"/>
    <property type="match status" value="1"/>
</dbReference>
<dbReference type="Pfam" id="PF05303">
    <property type="entry name" value="GSKIP_dom"/>
    <property type="match status" value="1"/>
</dbReference>
<dbReference type="Pfam" id="PF13374">
    <property type="entry name" value="TPR_10"/>
    <property type="match status" value="1"/>
</dbReference>
<dbReference type="Pfam" id="PF13424">
    <property type="entry name" value="TPR_12"/>
    <property type="match status" value="1"/>
</dbReference>
<dbReference type="SUPFAM" id="SSF103107">
    <property type="entry name" value="Hypothetical protein c14orf129, hspc210"/>
    <property type="match status" value="1"/>
</dbReference>
<dbReference type="SUPFAM" id="SSF48452">
    <property type="entry name" value="TPR-like"/>
    <property type="match status" value="2"/>
</dbReference>
<dbReference type="PROSITE" id="PS51823">
    <property type="entry name" value="CLU"/>
    <property type="match status" value="1"/>
</dbReference>
<feature type="chain" id="PRO_0000366384" description="Protein clueless">
    <location>
        <begin position="1"/>
        <end position="1435"/>
    </location>
</feature>
<feature type="domain" description="Clu" evidence="3">
    <location>
        <begin position="420"/>
        <end position="662"/>
    </location>
</feature>
<feature type="repeat" description="TPR 1">
    <location>
        <begin position="1096"/>
        <end position="1129"/>
    </location>
</feature>
<feature type="repeat" description="TPR 2">
    <location>
        <begin position="1222"/>
        <end position="1255"/>
    </location>
</feature>
<feature type="repeat" description="TPR 3">
    <location>
        <begin position="1257"/>
        <end position="1290"/>
    </location>
</feature>
<feature type="region of interest" description="Disordered" evidence="4">
    <location>
        <begin position="1"/>
        <end position="97"/>
    </location>
</feature>
<feature type="region of interest" description="Disordered" evidence="4">
    <location>
        <begin position="719"/>
        <end position="762"/>
    </location>
</feature>
<feature type="region of interest" description="Disordered" evidence="4">
    <location>
        <begin position="952"/>
        <end position="998"/>
    </location>
</feature>
<feature type="region of interest" description="Disordered" evidence="4">
    <location>
        <begin position="1407"/>
        <end position="1435"/>
    </location>
</feature>
<feature type="compositionally biased region" description="Low complexity" evidence="4">
    <location>
        <begin position="18"/>
        <end position="35"/>
    </location>
</feature>
<feature type="compositionally biased region" description="Polar residues" evidence="4">
    <location>
        <begin position="38"/>
        <end position="50"/>
    </location>
</feature>
<feature type="compositionally biased region" description="Basic residues" evidence="4">
    <location>
        <begin position="58"/>
        <end position="67"/>
    </location>
</feature>
<feature type="compositionally biased region" description="Basic and acidic residues" evidence="4">
    <location>
        <begin position="719"/>
        <end position="731"/>
    </location>
</feature>
<feature type="compositionally biased region" description="Basic and acidic residues" evidence="4">
    <location>
        <begin position="752"/>
        <end position="762"/>
    </location>
</feature>
<feature type="compositionally biased region" description="Basic residues" evidence="4">
    <location>
        <begin position="959"/>
        <end position="975"/>
    </location>
</feature>
<feature type="compositionally biased region" description="Low complexity" evidence="4">
    <location>
        <begin position="988"/>
        <end position="998"/>
    </location>
</feature>
<feature type="compositionally biased region" description="Polar residues" evidence="4">
    <location>
        <begin position="1417"/>
        <end position="1435"/>
    </location>
</feature>
<feature type="modified residue" description="Phosphoserine" evidence="1">
    <location>
        <position position="266"/>
    </location>
</feature>
<gene>
    <name evidence="2" type="primary">clu</name>
    <name type="ORF">GL11405</name>
</gene>
<accession>B4GAM1</accession>
<reference key="1">
    <citation type="journal article" date="2007" name="Nature">
        <title>Evolution of genes and genomes on the Drosophila phylogeny.</title>
        <authorList>
            <consortium name="Drosophila 12 genomes consortium"/>
        </authorList>
    </citation>
    <scope>NUCLEOTIDE SEQUENCE [LARGE SCALE GENOMIC DNA]</scope>
    <source>
        <strain>MSH-3 / Tucson 14011-0111.49</strain>
    </source>
</reference>
<evidence type="ECO:0000250" key="1"/>
<evidence type="ECO:0000255" key="2">
    <source>
        <dbReference type="HAMAP-Rule" id="MF_03013"/>
    </source>
</evidence>
<evidence type="ECO:0000255" key="3">
    <source>
        <dbReference type="PROSITE-ProRule" id="PRU01167"/>
    </source>
</evidence>
<evidence type="ECO:0000256" key="4">
    <source>
        <dbReference type="SAM" id="MobiDB-lite"/>
    </source>
</evidence>
<name>CLU_DROPE</name>
<proteinExistence type="inferred from homology"/>
<comment type="function">
    <text evidence="2">mRNA-binding protein involved in proper cytoplasmic distribution of mitochondria.</text>
</comment>
<comment type="subcellular location">
    <subcellularLocation>
        <location evidence="2">Cytoplasm</location>
    </subcellularLocation>
</comment>
<comment type="similarity">
    <text evidence="2">Belongs to the CLU family.</text>
</comment>